<gene>
    <name type="primary">yxcE</name>
    <name type="ordered locus">BSU39790</name>
    <name type="ORF">SS92DR</name>
</gene>
<comment type="subcellular location">
    <subcellularLocation>
        <location evidence="3">Cell membrane</location>
        <topology evidence="3">Multi-pass membrane protein</topology>
    </subcellularLocation>
</comment>
<evidence type="ECO:0000255" key="1"/>
<evidence type="ECO:0000256" key="2">
    <source>
        <dbReference type="SAM" id="MobiDB-lite"/>
    </source>
</evidence>
<evidence type="ECO:0000305" key="3"/>
<protein>
    <recommendedName>
        <fullName>Uncharacterized protein YxcE</fullName>
    </recommendedName>
</protein>
<organism>
    <name type="scientific">Bacillus subtilis (strain 168)</name>
    <dbReference type="NCBI Taxonomy" id="224308"/>
    <lineage>
        <taxon>Bacteria</taxon>
        <taxon>Bacillati</taxon>
        <taxon>Bacillota</taxon>
        <taxon>Bacilli</taxon>
        <taxon>Bacillales</taxon>
        <taxon>Bacillaceae</taxon>
        <taxon>Bacillus</taxon>
    </lineage>
</organism>
<accession>P46335</accession>
<dbReference type="EMBL" id="AB005554">
    <property type="protein sequence ID" value="BAA21606.1"/>
    <property type="molecule type" value="Genomic_DNA"/>
</dbReference>
<dbReference type="EMBL" id="AL009126">
    <property type="protein sequence ID" value="CAB16015.1"/>
    <property type="molecule type" value="Genomic_DNA"/>
</dbReference>
<dbReference type="PIR" id="F70073">
    <property type="entry name" value="F70073"/>
</dbReference>
<dbReference type="RefSeq" id="NP_391858.1">
    <property type="nucleotide sequence ID" value="NC_000964.3"/>
</dbReference>
<dbReference type="RefSeq" id="WP_003244225.1">
    <property type="nucleotide sequence ID" value="NZ_OZ025638.1"/>
</dbReference>
<dbReference type="SMR" id="P46335"/>
<dbReference type="FunCoup" id="P46335">
    <property type="interactions" value="136"/>
</dbReference>
<dbReference type="IntAct" id="P46335">
    <property type="interactions" value="1"/>
</dbReference>
<dbReference type="STRING" id="224308.BSU39790"/>
<dbReference type="PaxDb" id="224308-BSU39790"/>
<dbReference type="EnsemblBacteria" id="CAB16015">
    <property type="protein sequence ID" value="CAB16015"/>
    <property type="gene ID" value="BSU_39790"/>
</dbReference>
<dbReference type="GeneID" id="937621"/>
<dbReference type="KEGG" id="bsu:BSU39790"/>
<dbReference type="PATRIC" id="fig|224308.179.peg.4305"/>
<dbReference type="InParanoid" id="P46335"/>
<dbReference type="OrthoDB" id="2943475at2"/>
<dbReference type="BioCyc" id="BSUB:BSU39790-MONOMER"/>
<dbReference type="Proteomes" id="UP000001570">
    <property type="component" value="Chromosome"/>
</dbReference>
<dbReference type="GO" id="GO:0005886">
    <property type="term" value="C:plasma membrane"/>
    <property type="evidence" value="ECO:0007669"/>
    <property type="project" value="UniProtKB-SubCell"/>
</dbReference>
<reference key="1">
    <citation type="journal article" date="1995" name="DNA Res.">
        <title>Cloning and sequencing of a 36-kb region of the Bacillus subtilis genome between the gnt and iol operons.</title>
        <authorList>
            <person name="Yoshida K."/>
            <person name="Seki S."/>
            <person name="Fujimura M."/>
            <person name="Miwa Y."/>
            <person name="Fujita Y."/>
        </authorList>
    </citation>
    <scope>NUCLEOTIDE SEQUENCE [GENOMIC DNA]</scope>
    <source>
        <strain>168 / BGSC1A1</strain>
    </source>
</reference>
<reference key="2">
    <citation type="journal article" date="1997" name="Nature">
        <title>The complete genome sequence of the Gram-positive bacterium Bacillus subtilis.</title>
        <authorList>
            <person name="Kunst F."/>
            <person name="Ogasawara N."/>
            <person name="Moszer I."/>
            <person name="Albertini A.M."/>
            <person name="Alloni G."/>
            <person name="Azevedo V."/>
            <person name="Bertero M.G."/>
            <person name="Bessieres P."/>
            <person name="Bolotin A."/>
            <person name="Borchert S."/>
            <person name="Borriss R."/>
            <person name="Boursier L."/>
            <person name="Brans A."/>
            <person name="Braun M."/>
            <person name="Brignell S.C."/>
            <person name="Bron S."/>
            <person name="Brouillet S."/>
            <person name="Bruschi C.V."/>
            <person name="Caldwell B."/>
            <person name="Capuano V."/>
            <person name="Carter N.M."/>
            <person name="Choi S.-K."/>
            <person name="Codani J.-J."/>
            <person name="Connerton I.F."/>
            <person name="Cummings N.J."/>
            <person name="Daniel R.A."/>
            <person name="Denizot F."/>
            <person name="Devine K.M."/>
            <person name="Duesterhoeft A."/>
            <person name="Ehrlich S.D."/>
            <person name="Emmerson P.T."/>
            <person name="Entian K.-D."/>
            <person name="Errington J."/>
            <person name="Fabret C."/>
            <person name="Ferrari E."/>
            <person name="Foulger D."/>
            <person name="Fritz C."/>
            <person name="Fujita M."/>
            <person name="Fujita Y."/>
            <person name="Fuma S."/>
            <person name="Galizzi A."/>
            <person name="Galleron N."/>
            <person name="Ghim S.-Y."/>
            <person name="Glaser P."/>
            <person name="Goffeau A."/>
            <person name="Golightly E.J."/>
            <person name="Grandi G."/>
            <person name="Guiseppi G."/>
            <person name="Guy B.J."/>
            <person name="Haga K."/>
            <person name="Haiech J."/>
            <person name="Harwood C.R."/>
            <person name="Henaut A."/>
            <person name="Hilbert H."/>
            <person name="Holsappel S."/>
            <person name="Hosono S."/>
            <person name="Hullo M.-F."/>
            <person name="Itaya M."/>
            <person name="Jones L.-M."/>
            <person name="Joris B."/>
            <person name="Karamata D."/>
            <person name="Kasahara Y."/>
            <person name="Klaerr-Blanchard M."/>
            <person name="Klein C."/>
            <person name="Kobayashi Y."/>
            <person name="Koetter P."/>
            <person name="Koningstein G."/>
            <person name="Krogh S."/>
            <person name="Kumano M."/>
            <person name="Kurita K."/>
            <person name="Lapidus A."/>
            <person name="Lardinois S."/>
            <person name="Lauber J."/>
            <person name="Lazarevic V."/>
            <person name="Lee S.-M."/>
            <person name="Levine A."/>
            <person name="Liu H."/>
            <person name="Masuda S."/>
            <person name="Mauel C."/>
            <person name="Medigue C."/>
            <person name="Medina N."/>
            <person name="Mellado R.P."/>
            <person name="Mizuno M."/>
            <person name="Moestl D."/>
            <person name="Nakai S."/>
            <person name="Noback M."/>
            <person name="Noone D."/>
            <person name="O'Reilly M."/>
            <person name="Ogawa K."/>
            <person name="Ogiwara A."/>
            <person name="Oudega B."/>
            <person name="Park S.-H."/>
            <person name="Parro V."/>
            <person name="Pohl T.M."/>
            <person name="Portetelle D."/>
            <person name="Porwollik S."/>
            <person name="Prescott A.M."/>
            <person name="Presecan E."/>
            <person name="Pujic P."/>
            <person name="Purnelle B."/>
            <person name="Rapoport G."/>
            <person name="Rey M."/>
            <person name="Reynolds S."/>
            <person name="Rieger M."/>
            <person name="Rivolta C."/>
            <person name="Rocha E."/>
            <person name="Roche B."/>
            <person name="Rose M."/>
            <person name="Sadaie Y."/>
            <person name="Sato T."/>
            <person name="Scanlan E."/>
            <person name="Schleich S."/>
            <person name="Schroeter R."/>
            <person name="Scoffone F."/>
            <person name="Sekiguchi J."/>
            <person name="Sekowska A."/>
            <person name="Seror S.J."/>
            <person name="Serror P."/>
            <person name="Shin B.-S."/>
            <person name="Soldo B."/>
            <person name="Sorokin A."/>
            <person name="Tacconi E."/>
            <person name="Takagi T."/>
            <person name="Takahashi H."/>
            <person name="Takemaru K."/>
            <person name="Takeuchi M."/>
            <person name="Tamakoshi A."/>
            <person name="Tanaka T."/>
            <person name="Terpstra P."/>
            <person name="Tognoni A."/>
            <person name="Tosato V."/>
            <person name="Uchiyama S."/>
            <person name="Vandenbol M."/>
            <person name="Vannier F."/>
            <person name="Vassarotti A."/>
            <person name="Viari A."/>
            <person name="Wambutt R."/>
            <person name="Wedler E."/>
            <person name="Wedler H."/>
            <person name="Weitzenegger T."/>
            <person name="Winters P."/>
            <person name="Wipat A."/>
            <person name="Yamamoto H."/>
            <person name="Yamane K."/>
            <person name="Yasumoto K."/>
            <person name="Yata K."/>
            <person name="Yoshida K."/>
            <person name="Yoshikawa H.-F."/>
            <person name="Zumstein E."/>
            <person name="Yoshikawa H."/>
            <person name="Danchin A."/>
        </authorList>
    </citation>
    <scope>NUCLEOTIDE SEQUENCE [LARGE SCALE GENOMIC DNA]</scope>
    <source>
        <strain>168</strain>
    </source>
</reference>
<feature type="chain" id="PRO_0000050010" description="Uncharacterized protein YxcE">
    <location>
        <begin position="1"/>
        <end position="216"/>
    </location>
</feature>
<feature type="transmembrane region" description="Helical" evidence="1">
    <location>
        <begin position="5"/>
        <end position="25"/>
    </location>
</feature>
<feature type="transmembrane region" description="Helical" evidence="1">
    <location>
        <begin position="137"/>
        <end position="157"/>
    </location>
</feature>
<feature type="transmembrane region" description="Helical" evidence="1">
    <location>
        <begin position="183"/>
        <end position="203"/>
    </location>
</feature>
<feature type="region of interest" description="Disordered" evidence="2">
    <location>
        <begin position="28"/>
        <end position="115"/>
    </location>
</feature>
<feature type="compositionally biased region" description="Low complexity" evidence="2">
    <location>
        <begin position="28"/>
        <end position="67"/>
    </location>
</feature>
<feature type="compositionally biased region" description="Low complexity" evidence="2">
    <location>
        <begin position="89"/>
        <end position="108"/>
    </location>
</feature>
<proteinExistence type="predicted"/>
<name>YXCE_BACSU</name>
<sequence>MKLKYVKALVAVTVALGVLLPSTISHAKSFSGRSSSSYSSRSSSSSYSGSYKSSPKSSYSSGSSSSSKKSKTSDDSSSSISLKKKPSEKASSSSSKKSSGTFSGATSKVTGKTYSGKTSKAYVGGRYVSVNHYYHAGFAPSGWFGYYSGFTMGMFMISMMHPWGYTYHPVGGPGYVSYGASPIAWIVDIIALIIILIIVIALIRAFKAPKTYRRRF</sequence>
<keyword id="KW-1003">Cell membrane</keyword>
<keyword id="KW-0472">Membrane</keyword>
<keyword id="KW-1185">Reference proteome</keyword>
<keyword id="KW-0812">Transmembrane</keyword>
<keyword id="KW-1133">Transmembrane helix</keyword>